<reference key="1">
    <citation type="submission" date="1990-07" db="EMBL/GenBank/DDBJ databases">
        <title>Sequence and organisation of histone gene clusters in sea stars.</title>
        <authorList>
            <person name="Wu Y."/>
            <person name="Kowbel D."/>
            <person name="Smith M.J."/>
        </authorList>
    </citation>
    <scope>NUCLEOTIDE SEQUENCE [GENOMIC DNA]</scope>
</reference>
<keyword id="KW-0007">Acetylation</keyword>
<keyword id="KW-0158">Chromosome</keyword>
<keyword id="KW-0238">DNA-binding</keyword>
<keyword id="KW-0488">Methylation</keyword>
<keyword id="KW-0544">Nucleosome core</keyword>
<keyword id="KW-0539">Nucleus</keyword>
<keyword id="KW-0597">Phosphoprotein</keyword>
<comment type="function">
    <text>Core component of nucleosome. Nucleosomes wrap and compact DNA into chromatin, limiting DNA accessibility to the cellular machineries which require DNA as a template. Histones thereby play a central role in transcription regulation, DNA repair, DNA replication and chromosomal stability. DNA accessibility is regulated via a complex set of post-translational modifications of histones, also called histone code, and nucleosome remodeling.</text>
</comment>
<comment type="subunit">
    <text>The nucleosome is a histone octamer containing two molecules each of H2A, H2B, H3 and H4 assembled in one H3-H4 heterotetramer and two H2A-H2B heterodimers. The octamer wraps approximately 147 bp of DNA.</text>
</comment>
<comment type="subcellular location">
    <subcellularLocation>
        <location evidence="1">Nucleus</location>
    </subcellularLocation>
    <subcellularLocation>
        <location evidence="1">Chromosome</location>
    </subcellularLocation>
</comment>
<comment type="developmental stage">
    <text>This histone is expressed during late embryonic development.</text>
</comment>
<comment type="PTM">
    <text evidence="1">Acetylation is generally linked to gene activation.</text>
</comment>
<comment type="PTM">
    <text evidence="1">Methylation at Lys-5 is linked to gene activation. Methylation at Lys-10 is linked to gene repression (By similarity).</text>
</comment>
<comment type="similarity">
    <text evidence="3">Belongs to the histone H3 family.</text>
</comment>
<protein>
    <recommendedName>
        <fullName>Histone H3, embryonic</fullName>
    </recommendedName>
</protein>
<sequence>MARTKQTARKSTGGKAPRKQLATKAARKSAPATGGVKKPHRYRPGTVALREIRRYQKSTELLIRKLPFQRLVREIAQDFKTELRFQSSAVMALQEASEAYLVGLFEDTNLCAIHAKRVTIMPKDIQLARRIRGERA</sequence>
<proteinExistence type="evidence at transcript level"/>
<evidence type="ECO:0000250" key="1"/>
<evidence type="ECO:0000256" key="2">
    <source>
        <dbReference type="SAM" id="MobiDB-lite"/>
    </source>
</evidence>
<evidence type="ECO:0000305" key="3"/>
<dbReference type="EMBL" id="X54115">
    <property type="protein sequence ID" value="CAA38056.1"/>
    <property type="molecule type" value="Genomic_DNA"/>
</dbReference>
<dbReference type="PIR" id="S20678">
    <property type="entry name" value="S20678"/>
</dbReference>
<dbReference type="SMR" id="P69078"/>
<dbReference type="GO" id="GO:0000786">
    <property type="term" value="C:nucleosome"/>
    <property type="evidence" value="ECO:0007669"/>
    <property type="project" value="UniProtKB-KW"/>
</dbReference>
<dbReference type="GO" id="GO:0005634">
    <property type="term" value="C:nucleus"/>
    <property type="evidence" value="ECO:0007669"/>
    <property type="project" value="UniProtKB-SubCell"/>
</dbReference>
<dbReference type="GO" id="GO:0003677">
    <property type="term" value="F:DNA binding"/>
    <property type="evidence" value="ECO:0007669"/>
    <property type="project" value="UniProtKB-KW"/>
</dbReference>
<dbReference type="GO" id="GO:0046982">
    <property type="term" value="F:protein heterodimerization activity"/>
    <property type="evidence" value="ECO:0007669"/>
    <property type="project" value="InterPro"/>
</dbReference>
<dbReference type="GO" id="GO:0030527">
    <property type="term" value="F:structural constituent of chromatin"/>
    <property type="evidence" value="ECO:0007669"/>
    <property type="project" value="InterPro"/>
</dbReference>
<dbReference type="CDD" id="cd22911">
    <property type="entry name" value="HFD_H3"/>
    <property type="match status" value="1"/>
</dbReference>
<dbReference type="FunFam" id="1.10.20.10:FF:000078">
    <property type="entry name" value="Histone H3"/>
    <property type="match status" value="1"/>
</dbReference>
<dbReference type="FunFam" id="1.10.20.10:FF:000044">
    <property type="entry name" value="Histone H3.3"/>
    <property type="match status" value="1"/>
</dbReference>
<dbReference type="Gene3D" id="1.10.20.10">
    <property type="entry name" value="Histone, subunit A"/>
    <property type="match status" value="1"/>
</dbReference>
<dbReference type="InterPro" id="IPR009072">
    <property type="entry name" value="Histone-fold"/>
</dbReference>
<dbReference type="InterPro" id="IPR007125">
    <property type="entry name" value="Histone_H2A/H2B/H3"/>
</dbReference>
<dbReference type="InterPro" id="IPR000164">
    <property type="entry name" value="Histone_H3/CENP-A"/>
</dbReference>
<dbReference type="PANTHER" id="PTHR11426">
    <property type="entry name" value="HISTONE H3"/>
    <property type="match status" value="1"/>
</dbReference>
<dbReference type="Pfam" id="PF00125">
    <property type="entry name" value="Histone"/>
    <property type="match status" value="1"/>
</dbReference>
<dbReference type="PRINTS" id="PR00622">
    <property type="entry name" value="HISTONEH3"/>
</dbReference>
<dbReference type="SMART" id="SM00428">
    <property type="entry name" value="H3"/>
    <property type="match status" value="1"/>
</dbReference>
<dbReference type="SUPFAM" id="SSF47113">
    <property type="entry name" value="Histone-fold"/>
    <property type="match status" value="1"/>
</dbReference>
<dbReference type="PROSITE" id="PS00322">
    <property type="entry name" value="HISTONE_H3_1"/>
    <property type="match status" value="1"/>
</dbReference>
<dbReference type="PROSITE" id="PS00959">
    <property type="entry name" value="HISTONE_H3_2"/>
    <property type="match status" value="1"/>
</dbReference>
<feature type="initiator methionine" description="Removed" evidence="1">
    <location>
        <position position="1"/>
    </location>
</feature>
<feature type="chain" id="PRO_0000221318" description="Histone H3, embryonic">
    <location>
        <begin position="2"/>
        <end position="136"/>
    </location>
</feature>
<feature type="region of interest" description="Disordered" evidence="2">
    <location>
        <begin position="1"/>
        <end position="43"/>
    </location>
</feature>
<feature type="modified residue" description="N6-methylated lysine" evidence="1">
    <location>
        <position position="5"/>
    </location>
</feature>
<feature type="modified residue" description="N6-acetyllysine; alternate" evidence="1">
    <location>
        <position position="10"/>
    </location>
</feature>
<feature type="modified residue" description="N6-methylated lysine; alternate" evidence="1">
    <location>
        <position position="10"/>
    </location>
</feature>
<feature type="modified residue" description="Phosphoserine" evidence="1">
    <location>
        <position position="11"/>
    </location>
</feature>
<feature type="modified residue" description="N6-acetyllysine" evidence="1">
    <location>
        <position position="15"/>
    </location>
</feature>
<feature type="modified residue" description="N6-acetyllysine" evidence="1">
    <location>
        <position position="24"/>
    </location>
</feature>
<feature type="modified residue" description="N6-methylated lysine" evidence="1">
    <location>
        <position position="28"/>
    </location>
</feature>
<feature type="modified residue" description="N6-methylated lysine" evidence="1">
    <location>
        <position position="37"/>
    </location>
</feature>
<feature type="modified residue" description="N6-methylated lysine" evidence="1">
    <location>
        <position position="80"/>
    </location>
</feature>
<organism>
    <name type="scientific">Solaster stimpsoni</name>
    <name type="common">Striped sun sea star</name>
    <dbReference type="NCBI Taxonomy" id="7598"/>
    <lineage>
        <taxon>Eukaryota</taxon>
        <taxon>Metazoa</taxon>
        <taxon>Echinodermata</taxon>
        <taxon>Eleutherozoa</taxon>
        <taxon>Asterozoa</taxon>
        <taxon>Asteroidea</taxon>
        <taxon>Spinulosacea</taxon>
        <taxon>Velatida</taxon>
        <taxon>Solasteridae</taxon>
        <taxon>Solaster</taxon>
    </lineage>
</organism>
<accession>P69078</accession>
<accession>P02298</accession>
<accession>P05320</accession>
<accession>P05321</accession>
<accession>P05322</accession>
<name>H3_SOLST</name>